<accession>O51253</accession>
<gene>
    <name evidence="1" type="primary">lnt</name>
    <name type="ordered locus">BB_0237</name>
</gene>
<organism>
    <name type="scientific">Borreliella burgdorferi (strain ATCC 35210 / DSM 4680 / CIP 102532 / B31)</name>
    <name type="common">Borrelia burgdorferi</name>
    <dbReference type="NCBI Taxonomy" id="224326"/>
    <lineage>
        <taxon>Bacteria</taxon>
        <taxon>Pseudomonadati</taxon>
        <taxon>Spirochaetota</taxon>
        <taxon>Spirochaetia</taxon>
        <taxon>Spirochaetales</taxon>
        <taxon>Borreliaceae</taxon>
        <taxon>Borreliella</taxon>
    </lineage>
</organism>
<comment type="function">
    <text evidence="1">Catalyzes the phospholipid dependent N-acylation of the N-terminal cysteine of apolipoprotein, the last step in lipoprotein maturation.</text>
</comment>
<comment type="catalytic activity">
    <reaction evidence="1">
        <text>N-terminal S-1,2-diacyl-sn-glyceryl-L-cysteinyl-[lipoprotein] + a glycerophospholipid = N-acyl-S-1,2-diacyl-sn-glyceryl-L-cysteinyl-[lipoprotein] + a 2-acyl-sn-glycero-3-phospholipid + H(+)</text>
        <dbReference type="Rhea" id="RHEA:48228"/>
        <dbReference type="Rhea" id="RHEA-COMP:14681"/>
        <dbReference type="Rhea" id="RHEA-COMP:14684"/>
        <dbReference type="ChEBI" id="CHEBI:15378"/>
        <dbReference type="ChEBI" id="CHEBI:136912"/>
        <dbReference type="ChEBI" id="CHEBI:140656"/>
        <dbReference type="ChEBI" id="CHEBI:140657"/>
        <dbReference type="ChEBI" id="CHEBI:140660"/>
        <dbReference type="EC" id="2.3.1.269"/>
    </reaction>
</comment>
<comment type="pathway">
    <text evidence="1">Protein modification; lipoprotein biosynthesis (N-acyl transfer).</text>
</comment>
<comment type="subcellular location">
    <subcellularLocation>
        <location evidence="1">Cell inner membrane</location>
        <topology evidence="1">Multi-pass membrane protein</topology>
    </subcellularLocation>
</comment>
<comment type="similarity">
    <text evidence="1">Belongs to the CN hydrolase family. Apolipoprotein N-acyltransferase subfamily.</text>
</comment>
<name>LNT_BORBU</name>
<dbReference type="EC" id="2.3.1.269" evidence="1"/>
<dbReference type="EMBL" id="AE000783">
    <property type="protein sequence ID" value="AAC66631.1"/>
    <property type="molecule type" value="Genomic_DNA"/>
</dbReference>
<dbReference type="PIR" id="E70129">
    <property type="entry name" value="E70129"/>
</dbReference>
<dbReference type="RefSeq" id="NP_212371.1">
    <property type="nucleotide sequence ID" value="NC_001318.1"/>
</dbReference>
<dbReference type="RefSeq" id="WP_010889713.1">
    <property type="nucleotide sequence ID" value="NC_001318.1"/>
</dbReference>
<dbReference type="SMR" id="O51253"/>
<dbReference type="STRING" id="224326.BB_0237"/>
<dbReference type="PaxDb" id="224326-BB_0237"/>
<dbReference type="EnsemblBacteria" id="AAC66631">
    <property type="protein sequence ID" value="AAC66631"/>
    <property type="gene ID" value="BB_0237"/>
</dbReference>
<dbReference type="KEGG" id="bbu:BB_0237"/>
<dbReference type="PATRIC" id="fig|224326.49.peg.636"/>
<dbReference type="HOGENOM" id="CLU_019563_1_1_12"/>
<dbReference type="OrthoDB" id="9811121at2"/>
<dbReference type="UniPathway" id="UPA00666"/>
<dbReference type="Proteomes" id="UP000001807">
    <property type="component" value="Chromosome"/>
</dbReference>
<dbReference type="GO" id="GO:0005886">
    <property type="term" value="C:plasma membrane"/>
    <property type="evidence" value="ECO:0007669"/>
    <property type="project" value="UniProtKB-SubCell"/>
</dbReference>
<dbReference type="GO" id="GO:0016410">
    <property type="term" value="F:N-acyltransferase activity"/>
    <property type="evidence" value="ECO:0007669"/>
    <property type="project" value="UniProtKB-UniRule"/>
</dbReference>
<dbReference type="GO" id="GO:0042158">
    <property type="term" value="P:lipoprotein biosynthetic process"/>
    <property type="evidence" value="ECO:0007669"/>
    <property type="project" value="UniProtKB-UniRule"/>
</dbReference>
<dbReference type="CDD" id="cd07571">
    <property type="entry name" value="ALP_N-acyl_transferase"/>
    <property type="match status" value="1"/>
</dbReference>
<dbReference type="Gene3D" id="3.60.110.10">
    <property type="entry name" value="Carbon-nitrogen hydrolase"/>
    <property type="match status" value="1"/>
</dbReference>
<dbReference type="HAMAP" id="MF_01148">
    <property type="entry name" value="Lnt"/>
    <property type="match status" value="1"/>
</dbReference>
<dbReference type="InterPro" id="IPR004563">
    <property type="entry name" value="Apolipo_AcylTrfase"/>
</dbReference>
<dbReference type="InterPro" id="IPR003010">
    <property type="entry name" value="C-N_Hydrolase"/>
</dbReference>
<dbReference type="InterPro" id="IPR036526">
    <property type="entry name" value="C-N_Hydrolase_sf"/>
</dbReference>
<dbReference type="InterPro" id="IPR045378">
    <property type="entry name" value="LNT_N"/>
</dbReference>
<dbReference type="NCBIfam" id="TIGR00546">
    <property type="entry name" value="lnt"/>
    <property type="match status" value="1"/>
</dbReference>
<dbReference type="PANTHER" id="PTHR38686">
    <property type="entry name" value="APOLIPOPROTEIN N-ACYLTRANSFERASE"/>
    <property type="match status" value="1"/>
</dbReference>
<dbReference type="PANTHER" id="PTHR38686:SF1">
    <property type="entry name" value="APOLIPOPROTEIN N-ACYLTRANSFERASE"/>
    <property type="match status" value="1"/>
</dbReference>
<dbReference type="Pfam" id="PF00795">
    <property type="entry name" value="CN_hydrolase"/>
    <property type="match status" value="1"/>
</dbReference>
<dbReference type="Pfam" id="PF20154">
    <property type="entry name" value="LNT_N"/>
    <property type="match status" value="1"/>
</dbReference>
<dbReference type="SUPFAM" id="SSF56317">
    <property type="entry name" value="Carbon-nitrogen hydrolase"/>
    <property type="match status" value="1"/>
</dbReference>
<dbReference type="PROSITE" id="PS50263">
    <property type="entry name" value="CN_HYDROLASE"/>
    <property type="match status" value="1"/>
</dbReference>
<evidence type="ECO:0000255" key="1">
    <source>
        <dbReference type="HAMAP-Rule" id="MF_01148"/>
    </source>
</evidence>
<feature type="chain" id="PRO_0000178046" description="Apolipoprotein N-acyltransferase">
    <location>
        <begin position="1"/>
        <end position="521"/>
    </location>
</feature>
<feature type="transmembrane region" description="Helical" evidence="1">
    <location>
        <begin position="24"/>
        <end position="44"/>
    </location>
</feature>
<feature type="transmembrane region" description="Helical" evidence="1">
    <location>
        <begin position="71"/>
        <end position="91"/>
    </location>
</feature>
<feature type="transmembrane region" description="Helical" evidence="1">
    <location>
        <begin position="128"/>
        <end position="148"/>
    </location>
</feature>
<feature type="transmembrane region" description="Helical" evidence="1">
    <location>
        <begin position="151"/>
        <end position="171"/>
    </location>
</feature>
<feature type="transmembrane region" description="Helical" evidence="1">
    <location>
        <begin position="182"/>
        <end position="202"/>
    </location>
</feature>
<feature type="domain" description="CN hydrolase" evidence="1">
    <location>
        <begin position="218"/>
        <end position="472"/>
    </location>
</feature>
<feature type="active site" description="Proton acceptor" evidence="1">
    <location>
        <position position="263"/>
    </location>
</feature>
<feature type="active site" evidence="1">
    <location>
        <position position="331"/>
    </location>
</feature>
<feature type="active site" description="Nucleophile" evidence="1">
    <location>
        <position position="383"/>
    </location>
</feature>
<sequence length="521" mass="59737">MKTRCFCLAAFSGILTTLAIPNEIKETGYSILGFVAYVPLFIALNKLEDKKALMGLTVFYFIIANSLQNFWLGFFHAFGWITFIGVIIGYIPYSLTLGYFLYYSLKSFKNKTMSITMLFTFYDYSRSIGFLAYPWGLAAFTVNNFNNLIQIADIFGVFFVSFAVYFLNSGIADFLIHKNKTNLLNIAFPTLLITASFTYGMIKKIELKNLLAKEIDSLNIAAIQLNTDPWLPGNDKKGIRDSIEITEQALKENPKIEFVIWSEGVLTYPFSKEDQHFKSSDLHNELKNFIKEHKIPFAIGAPSNLDKAIGIQQNSIYMVEPNLNITNIYSKIFLVPFAEKIPFYEYKFVRNFFLKNFRILGQIEGNKIEILKLKKFKFAPLICYDDAFPELSRFYKTQGANILVNFSNDSWSKTNSAEWQHFVVAKFRSIENGIKTIRATNSGITATINEYGETIKKLETFKKGYLLSTVKLSPTFTTIYEKIGDSFIHILVMMFLITTLRFQFMEDKNQLLSSSVVKIKV</sequence>
<reference key="1">
    <citation type="journal article" date="1997" name="Nature">
        <title>Genomic sequence of a Lyme disease spirochaete, Borrelia burgdorferi.</title>
        <authorList>
            <person name="Fraser C.M."/>
            <person name="Casjens S."/>
            <person name="Huang W.M."/>
            <person name="Sutton G.G."/>
            <person name="Clayton R.A."/>
            <person name="Lathigra R."/>
            <person name="White O."/>
            <person name="Ketchum K.A."/>
            <person name="Dodson R.J."/>
            <person name="Hickey E.K."/>
            <person name="Gwinn M.L."/>
            <person name="Dougherty B.A."/>
            <person name="Tomb J.-F."/>
            <person name="Fleischmann R.D."/>
            <person name="Richardson D.L."/>
            <person name="Peterson J.D."/>
            <person name="Kerlavage A.R."/>
            <person name="Quackenbush J."/>
            <person name="Salzberg S.L."/>
            <person name="Hanson M."/>
            <person name="van Vugt R."/>
            <person name="Palmer N."/>
            <person name="Adams M.D."/>
            <person name="Gocayne J.D."/>
            <person name="Weidman J.F."/>
            <person name="Utterback T.R."/>
            <person name="Watthey L."/>
            <person name="McDonald L.A."/>
            <person name="Artiach P."/>
            <person name="Bowman C."/>
            <person name="Garland S.A."/>
            <person name="Fujii C."/>
            <person name="Cotton M.D."/>
            <person name="Horst K."/>
            <person name="Roberts K.M."/>
            <person name="Hatch B."/>
            <person name="Smith H.O."/>
            <person name="Venter J.C."/>
        </authorList>
    </citation>
    <scope>NUCLEOTIDE SEQUENCE [LARGE SCALE GENOMIC DNA]</scope>
    <source>
        <strain>ATCC 35210 / DSM 4680 / CIP 102532 / B31</strain>
    </source>
</reference>
<proteinExistence type="inferred from homology"/>
<keyword id="KW-0012">Acyltransferase</keyword>
<keyword id="KW-0997">Cell inner membrane</keyword>
<keyword id="KW-1003">Cell membrane</keyword>
<keyword id="KW-0472">Membrane</keyword>
<keyword id="KW-1185">Reference proteome</keyword>
<keyword id="KW-0808">Transferase</keyword>
<keyword id="KW-0812">Transmembrane</keyword>
<keyword id="KW-1133">Transmembrane helix</keyword>
<protein>
    <recommendedName>
        <fullName evidence="1">Apolipoprotein N-acyltransferase</fullName>
        <shortName evidence="1">ALP N-acyltransferase</shortName>
        <ecNumber evidence="1">2.3.1.269</ecNumber>
    </recommendedName>
</protein>